<comment type="function">
    <text>NDH-1 shuttles electrons from NADH, via FMN and iron-sulfur (Fe-S) centers, to quinones in the respiratory chain. The immediate electron acceptor for the enzyme in this species is believed to be ubiquinone. Couples the redox reaction to proton translocation (for every two electrons transferred, four hydrogen ions are translocated across the cytoplasmic membrane), and thus conserves the redox energy in a proton gradient.</text>
</comment>
<comment type="catalytic activity">
    <reaction>
        <text>a quinone + NADH + 5 H(+)(in) = a quinol + NAD(+) + 4 H(+)(out)</text>
        <dbReference type="Rhea" id="RHEA:57888"/>
        <dbReference type="ChEBI" id="CHEBI:15378"/>
        <dbReference type="ChEBI" id="CHEBI:24646"/>
        <dbReference type="ChEBI" id="CHEBI:57540"/>
        <dbReference type="ChEBI" id="CHEBI:57945"/>
        <dbReference type="ChEBI" id="CHEBI:132124"/>
    </reaction>
</comment>
<comment type="subunit">
    <text>NDH-1 is composed of at least 14 different subunits, Nqo1 to Nqo14. The complex has a L-shaped structure, with the hydrophobic arm (subunits Nqo7, Nqo8, Nqo10 to Nqo14) embedded in the inner membrane and the hydrophilic peripheral arm (subunits Nqo1 to Nqo6, Nqo9) protruding into the bacterial cytoplasm. The hydrophilic domain contains all the redox centers.</text>
</comment>
<comment type="subcellular location">
    <subcellularLocation>
        <location>Cell inner membrane</location>
        <topology>Multi-pass membrane protein</topology>
    </subcellularLocation>
</comment>
<comment type="similarity">
    <text evidence="3">Belongs to the complex I subunit 4 family.</text>
</comment>
<keyword id="KW-0997">Cell inner membrane</keyword>
<keyword id="KW-1003">Cell membrane</keyword>
<keyword id="KW-0472">Membrane</keyword>
<keyword id="KW-0520">NAD</keyword>
<keyword id="KW-0874">Quinone</keyword>
<keyword id="KW-1278">Translocase</keyword>
<keyword id="KW-0812">Transmembrane</keyword>
<keyword id="KW-1133">Transmembrane helix</keyword>
<keyword id="KW-0830">Ubiquinone</keyword>
<gene>
    <name evidence="2" type="primary">nqo13</name>
</gene>
<protein>
    <recommendedName>
        <fullName>NADH-quinone oxidoreductase chain 13</fullName>
        <ecNumber>7.1.1.-</ecNumber>
    </recommendedName>
    <alternativeName>
        <fullName>NADH dehydrogenase I, chain 13</fullName>
    </alternativeName>
    <alternativeName>
        <fullName>NDH-1, chain 13</fullName>
    </alternativeName>
</protein>
<organism>
    <name type="scientific">Paracoccus denitrificans</name>
    <dbReference type="NCBI Taxonomy" id="266"/>
    <lineage>
        <taxon>Bacteria</taxon>
        <taxon>Pseudomonadati</taxon>
        <taxon>Pseudomonadota</taxon>
        <taxon>Alphaproteobacteria</taxon>
        <taxon>Rhodobacterales</taxon>
        <taxon>Paracoccaceae</taxon>
        <taxon>Paracoccus</taxon>
    </lineage>
</organism>
<accession>P29925</accession>
<proteinExistence type="inferred from homology"/>
<sequence length="513" mass="56417">MTNLLSIITFLPIVAAIIMALFLRGQDEAAARNAKWLALLTTTATFVISLFVLFRFDPANTGFQFVEDHAWIMGVCYKMGVDGISVLFVLLTTFMMPLTILSTWQVQDKVKEYMIAFLVLEGLMIGVFTALDLVLFYLFFEAGLIPMFLIIGIWGGKDRIYASFKFFLYTFLGSVLMLVAMIAMYRMAGTTDIPTLLTFDFPSENFRLLGMTVVGGMQMLLFLAFFASFAVKMPMWPVHTWLPDAHVQAPTAGSVLLAAVLLKMGGYGFLRFSLPMFPVASGVAQPYVFWLSAIAIVYTSLVALAQSDMKKVIAYSSVAHMGYVTMGVFAANQIGVDGAIFQMLSHGFISGALFLCVGVIYDRMHTREIDAYGGLVNRMPAYAAVFMFFTMANVGLPGTSGFVGEFLTLMGVFRVDTWVALVATSGVILSAAYALWLYRRVTLGQLIKESLKSITDMTPRERWVFIPLIAMTLILGVYPRLVTDVTGPAVAALVQDYNQSQPAAPVATAQASH</sequence>
<evidence type="ECO:0000255" key="1"/>
<evidence type="ECO:0000303" key="2">
    <source>
    </source>
</evidence>
<evidence type="ECO:0000305" key="3"/>
<dbReference type="EC" id="7.1.1.-"/>
<dbReference type="EMBL" id="L02354">
    <property type="protein sequence ID" value="AAA25599.1"/>
    <property type="molecule type" value="Genomic_DNA"/>
</dbReference>
<dbReference type="PIR" id="I45456">
    <property type="entry name" value="I45456"/>
</dbReference>
<dbReference type="SMR" id="P29925"/>
<dbReference type="TCDB" id="3.D.1.2.1">
    <property type="family name" value="the h+ or na+-translocating nadh dehydrogenase (ndh) family"/>
</dbReference>
<dbReference type="GO" id="GO:0005886">
    <property type="term" value="C:plasma membrane"/>
    <property type="evidence" value="ECO:0007669"/>
    <property type="project" value="UniProtKB-SubCell"/>
</dbReference>
<dbReference type="GO" id="GO:0008137">
    <property type="term" value="F:NADH dehydrogenase (ubiquinone) activity"/>
    <property type="evidence" value="ECO:0007669"/>
    <property type="project" value="InterPro"/>
</dbReference>
<dbReference type="GO" id="GO:0048039">
    <property type="term" value="F:ubiquinone binding"/>
    <property type="evidence" value="ECO:0007669"/>
    <property type="project" value="TreeGrafter"/>
</dbReference>
<dbReference type="GO" id="GO:0042773">
    <property type="term" value="P:ATP synthesis coupled electron transport"/>
    <property type="evidence" value="ECO:0007669"/>
    <property type="project" value="InterPro"/>
</dbReference>
<dbReference type="GO" id="GO:0015990">
    <property type="term" value="P:electron transport coupled proton transport"/>
    <property type="evidence" value="ECO:0007669"/>
    <property type="project" value="TreeGrafter"/>
</dbReference>
<dbReference type="InterPro" id="IPR010227">
    <property type="entry name" value="NADH_Q_OxRdtase_chainM/4"/>
</dbReference>
<dbReference type="InterPro" id="IPR003918">
    <property type="entry name" value="NADH_UbQ_OxRdtase"/>
</dbReference>
<dbReference type="InterPro" id="IPR001750">
    <property type="entry name" value="ND/Mrp_TM"/>
</dbReference>
<dbReference type="NCBIfam" id="TIGR01972">
    <property type="entry name" value="NDH_I_M"/>
    <property type="match status" value="1"/>
</dbReference>
<dbReference type="NCBIfam" id="NF004499">
    <property type="entry name" value="PRK05846.1-3"/>
    <property type="match status" value="1"/>
</dbReference>
<dbReference type="NCBIfam" id="NF004501">
    <property type="entry name" value="PRK05846.1-5"/>
    <property type="match status" value="1"/>
</dbReference>
<dbReference type="PANTHER" id="PTHR43507">
    <property type="entry name" value="NADH-UBIQUINONE OXIDOREDUCTASE CHAIN 4"/>
    <property type="match status" value="1"/>
</dbReference>
<dbReference type="PANTHER" id="PTHR43507:SF1">
    <property type="entry name" value="NADH-UBIQUINONE OXIDOREDUCTASE CHAIN 4"/>
    <property type="match status" value="1"/>
</dbReference>
<dbReference type="Pfam" id="PF00361">
    <property type="entry name" value="Proton_antipo_M"/>
    <property type="match status" value="1"/>
</dbReference>
<dbReference type="PRINTS" id="PR01437">
    <property type="entry name" value="NUOXDRDTASE4"/>
</dbReference>
<reference key="1">
    <citation type="journal article" date="1993" name="Biochemistry">
        <title>DNA sequencing of the seven remaining structural genes of the gene cluster encoding the energy-transducing NADH-quinone oxidoreductase of Paracoccus denitrificans.</title>
        <authorList>
            <person name="Xu X."/>
            <person name="Matsuno-Yagi A."/>
            <person name="Yagi T."/>
        </authorList>
    </citation>
    <scope>NUCLEOTIDE SEQUENCE [GENOMIC DNA]</scope>
    <source>
        <strain>ATCC 13543 / NRRL B-3784 / NRC 449</strain>
    </source>
</reference>
<feature type="chain" id="PRO_0000118037" description="NADH-quinone oxidoreductase chain 13">
    <location>
        <begin position="1"/>
        <end position="513"/>
    </location>
</feature>
<feature type="transmembrane region" description="Helical" evidence="1">
    <location>
        <begin position="3"/>
        <end position="23"/>
    </location>
</feature>
<feature type="transmembrane region" description="Helical" evidence="1">
    <location>
        <begin position="34"/>
        <end position="54"/>
    </location>
</feature>
<feature type="transmembrane region" description="Helical" evidence="1">
    <location>
        <begin position="81"/>
        <end position="101"/>
    </location>
</feature>
<feature type="transmembrane region" description="Helical" evidence="1">
    <location>
        <begin position="112"/>
        <end position="132"/>
    </location>
</feature>
<feature type="transmembrane region" description="Helical" evidence="1">
    <location>
        <begin position="133"/>
        <end position="153"/>
    </location>
</feature>
<feature type="transmembrane region" description="Helical" evidence="1">
    <location>
        <begin position="164"/>
        <end position="184"/>
    </location>
</feature>
<feature type="transmembrane region" description="Helical" evidence="1">
    <location>
        <begin position="211"/>
        <end position="231"/>
    </location>
</feature>
<feature type="transmembrane region" description="Helical" evidence="1">
    <location>
        <begin position="250"/>
        <end position="270"/>
    </location>
</feature>
<feature type="transmembrane region" description="Helical" evidence="1">
    <location>
        <begin position="277"/>
        <end position="297"/>
    </location>
</feature>
<feature type="transmembrane region" description="Helical" evidence="1">
    <location>
        <begin position="312"/>
        <end position="332"/>
    </location>
</feature>
<feature type="transmembrane region" description="Helical" evidence="1">
    <location>
        <begin position="340"/>
        <end position="360"/>
    </location>
</feature>
<feature type="transmembrane region" description="Helical" evidence="1">
    <location>
        <begin position="383"/>
        <end position="403"/>
    </location>
</feature>
<feature type="transmembrane region" description="Helical" evidence="1">
    <location>
        <begin position="418"/>
        <end position="438"/>
    </location>
</feature>
<feature type="transmembrane region" description="Helical" evidence="1">
    <location>
        <begin position="463"/>
        <end position="483"/>
    </location>
</feature>
<name>NQO13_PARDE</name>